<sequence>METKRVEIPGSVLDDLCSRFILHIPSEERDNAIRVCFQIELAHWFYLDFYMQNTPGLSQCGIRDFAKAVFSHCPFLLPEGEDVEKVLDEWKEYKMGVPTYGAIILDETLENVLLVQGYLAKSGWGFPKGKVNKEEAPHDCAAREVFEETGFDIKDYICKDDYIELRINDQLARLYIIPGIPKDTKFNPKTRREIRNIEWFSIEKLPCHRNDMTPKSKLGLAPNKFFMAIPFIRPLRDWLSRRFGDSSDSDNGFSSTGSTPAKPTVEKLSRTKFRHSQQLFPDGSPGDQWVKHRQPLQQKPYNNHSEMSDLLKGKKCEKKLHPRKLQDNFETDAVYDLPSSNEDQLLEHAEGQPVACNGHCKFPFSSRAFLSFKFDHNAIMKILDL</sequence>
<accession>Q5REQ8</accession>
<protein>
    <recommendedName>
        <fullName>m7GpppN-mRNA hydrolase</fullName>
        <ecNumber evidence="2">3.6.1.62</ecNumber>
    </recommendedName>
    <alternativeName>
        <fullName>mRNA-decapping enzyme 2</fullName>
    </alternativeName>
</protein>
<gene>
    <name type="primary">DCP2</name>
</gene>
<proteinExistence type="evidence at transcript level"/>
<feature type="chain" id="PRO_0000057053" description="m7GpppN-mRNA hydrolase">
    <location>
        <begin position="1"/>
        <end position="385"/>
    </location>
</feature>
<feature type="domain" description="Nudix hydrolase" evidence="3">
    <location>
        <begin position="95"/>
        <end position="226"/>
    </location>
</feature>
<feature type="region of interest" description="Disordered" evidence="4">
    <location>
        <begin position="247"/>
        <end position="266"/>
    </location>
</feature>
<feature type="short sequence motif" description="Nudix box">
    <location>
        <begin position="129"/>
        <end position="150"/>
    </location>
</feature>
<feature type="compositionally biased region" description="Low complexity" evidence="4">
    <location>
        <begin position="249"/>
        <end position="259"/>
    </location>
</feature>
<feature type="binding site" evidence="1">
    <location>
        <position position="144"/>
    </location>
    <ligand>
        <name>Mn(2+)</name>
        <dbReference type="ChEBI" id="CHEBI:29035"/>
    </ligand>
</feature>
<feature type="binding site" evidence="1">
    <location>
        <position position="148"/>
    </location>
    <ligand>
        <name>Mn(2+)</name>
        <dbReference type="ChEBI" id="CHEBI:29035"/>
    </ligand>
</feature>
<feature type="modified residue" description="Phosphoserine" evidence="2">
    <location>
        <position position="246"/>
    </location>
</feature>
<feature type="modified residue" description="Phosphoserine" evidence="2">
    <location>
        <position position="247"/>
    </location>
</feature>
<feature type="modified residue" description="Phosphoserine" evidence="2">
    <location>
        <position position="249"/>
    </location>
</feature>
<feature type="modified residue" description="Phosphoserine" evidence="2">
    <location>
        <position position="276"/>
    </location>
</feature>
<feature type="modified residue" description="Phosphoserine" evidence="2">
    <location>
        <position position="284"/>
    </location>
</feature>
<name>DCP2_PONAB</name>
<keyword id="KW-0963">Cytoplasm</keyword>
<keyword id="KW-0378">Hydrolase</keyword>
<keyword id="KW-0464">Manganese</keyword>
<keyword id="KW-0479">Metal-binding</keyword>
<keyword id="KW-0866">Nonsense-mediated mRNA decay</keyword>
<keyword id="KW-0539">Nucleus</keyword>
<keyword id="KW-0597">Phosphoprotein</keyword>
<keyword id="KW-1185">Reference proteome</keyword>
<keyword id="KW-0694">RNA-binding</keyword>
<comment type="function">
    <text evidence="2">Decapping metalloenzyme that catalyzes the cleavage of the cap structure on mRNAs. Removes the 7-methyl guanine cap structure from mRNA molecules, yielding a 5'-phosphorylated mRNA fragment and 7m-GDP. Necessary for the degradation of mRNAs, both in normal mRNA turnover and in nonsense-mediated mRNA decay. Plays a role in replication-dependent histone mRNA degradation. Has higher activity towards mRNAs that lack a poly(A) tail. Has no activity towards a cap structure lacking an RNA moiety. The presence of a N(6)-methyladenosine methylation at the second transcribed position of mRNAs (N(6),2'-O-dimethyladenosine cap; m6A(m)) provides resistance to DCP2-mediated decapping. Blocks autophagy in nutrient-rich conditions by repressing the expression of ATG-related genes through degradation of their transcripts.</text>
</comment>
<comment type="catalytic activity">
    <reaction evidence="2">
        <text>a 5'-end (N(7)-methyl 5'-triphosphoguanosine)-ribonucleoside in mRNA + H2O = N(7)-methyl-GDP + a 5'-end phospho-ribonucleoside in mRNA + 2 H(+)</text>
        <dbReference type="Rhea" id="RHEA:67484"/>
        <dbReference type="Rhea" id="RHEA-COMP:15692"/>
        <dbReference type="Rhea" id="RHEA-COMP:17167"/>
        <dbReference type="ChEBI" id="CHEBI:15377"/>
        <dbReference type="ChEBI" id="CHEBI:15378"/>
        <dbReference type="ChEBI" id="CHEBI:63714"/>
        <dbReference type="ChEBI" id="CHEBI:138282"/>
        <dbReference type="ChEBI" id="CHEBI:156461"/>
        <dbReference type="EC" id="3.6.1.62"/>
    </reaction>
    <physiologicalReaction direction="left-to-right" evidence="2">
        <dbReference type="Rhea" id="RHEA:67485"/>
    </physiologicalReaction>
</comment>
<comment type="cofactor">
    <cofactor evidence="1">
        <name>Mn(2+)</name>
        <dbReference type="ChEBI" id="CHEBI:29035"/>
    </cofactor>
    <cofactor evidence="1">
        <name>Mg(2+)</name>
        <dbReference type="ChEBI" id="CHEBI:18420"/>
    </cofactor>
    <text evidence="1">Mn(2+) ion is required for highest activity. Can also utilize magnesium ions.</text>
</comment>
<comment type="subunit">
    <text evidence="2">Found in a mRNA decay complex with LSM1, LSM3, LSM4, EXOSC2, EXOSC4, EXOSC10, PARN, XRN1, CNOT6, UPF1, UPF2 and UPF3B. Forms a complex with DCP1A, EDC3, DDX6 and EDC4/HEDLS, within this complex directly interacts with EDC4/HEDLS. Interacts with DPC1B, UPF1, UPF2 and UPF3B. Associates with polysomes. Interacts (via N-terminus and C-terminus) with TRIM21 (via N-terminus and C-terminus). Interacts with LIMD1, WTIP and AJUBA. Interacts with DDX17 in an RNA-dependent manner. Interacts with ZC3HAV1. Interacts with APOBEC3G in an RNA-dependent manner. Interacts with ZFP36L1 (via N-terminus). Interacts with NBDY.</text>
</comment>
<comment type="subcellular location">
    <subcellularLocation>
        <location evidence="1">Cytoplasm</location>
        <location evidence="1">P-body</location>
    </subcellularLocation>
    <subcellularLocation>
        <location evidence="1">Nucleus</location>
    </subcellularLocation>
    <text evidence="1">Predominantly cytoplasmic, in processing bodies (PB). A minor amount is nuclear.</text>
</comment>
<comment type="similarity">
    <text evidence="5">Belongs to the Nudix hydrolase family. DCP2 subfamily.</text>
</comment>
<reference key="1">
    <citation type="submission" date="2004-11" db="EMBL/GenBank/DDBJ databases">
        <authorList>
            <consortium name="The German cDNA consortium"/>
        </authorList>
    </citation>
    <scope>NUCLEOTIDE SEQUENCE [LARGE SCALE MRNA]</scope>
    <source>
        <tissue>Kidney</tissue>
    </source>
</reference>
<dbReference type="EC" id="3.6.1.62" evidence="2"/>
<dbReference type="EMBL" id="CR857460">
    <property type="protein sequence ID" value="CAH89749.1"/>
    <property type="molecule type" value="mRNA"/>
</dbReference>
<dbReference type="RefSeq" id="NP_001124545.1">
    <property type="nucleotide sequence ID" value="NM_001131073.1"/>
</dbReference>
<dbReference type="SMR" id="Q5REQ8"/>
<dbReference type="FunCoup" id="Q5REQ8">
    <property type="interactions" value="1886"/>
</dbReference>
<dbReference type="STRING" id="9601.ENSPPYP00000018067"/>
<dbReference type="GeneID" id="100127054"/>
<dbReference type="KEGG" id="pon:100127054"/>
<dbReference type="CTD" id="167227"/>
<dbReference type="eggNOG" id="KOG2937">
    <property type="taxonomic scope" value="Eukaryota"/>
</dbReference>
<dbReference type="InParanoid" id="Q5REQ8"/>
<dbReference type="OrthoDB" id="18996at2759"/>
<dbReference type="Proteomes" id="UP000001595">
    <property type="component" value="Unplaced"/>
</dbReference>
<dbReference type="GO" id="GO:0005634">
    <property type="term" value="C:nucleus"/>
    <property type="evidence" value="ECO:0007669"/>
    <property type="project" value="UniProtKB-SubCell"/>
</dbReference>
<dbReference type="GO" id="GO:0000932">
    <property type="term" value="C:P-body"/>
    <property type="evidence" value="ECO:0007669"/>
    <property type="project" value="UniProtKB-SubCell"/>
</dbReference>
<dbReference type="GO" id="GO:0140933">
    <property type="term" value="F:5'-(N(7)-methylguanosine 5'-triphospho)-[mRNA] hydrolase activity"/>
    <property type="evidence" value="ECO:0000250"/>
    <property type="project" value="UniProtKB"/>
</dbReference>
<dbReference type="GO" id="GO:0030145">
    <property type="term" value="F:manganese ion binding"/>
    <property type="evidence" value="ECO:0007669"/>
    <property type="project" value="InterPro"/>
</dbReference>
<dbReference type="GO" id="GO:0003723">
    <property type="term" value="F:RNA binding"/>
    <property type="evidence" value="ECO:0007669"/>
    <property type="project" value="UniProtKB-KW"/>
</dbReference>
<dbReference type="GO" id="GO:0000290">
    <property type="term" value="P:deadenylation-dependent decapping of nuclear-transcribed mRNA"/>
    <property type="evidence" value="ECO:0007669"/>
    <property type="project" value="InterPro"/>
</dbReference>
<dbReference type="GO" id="GO:0071044">
    <property type="term" value="P:histone mRNA catabolic process"/>
    <property type="evidence" value="ECO:0000250"/>
    <property type="project" value="UniProtKB"/>
</dbReference>
<dbReference type="GO" id="GO:0006402">
    <property type="term" value="P:mRNA catabolic process"/>
    <property type="evidence" value="ECO:0000250"/>
    <property type="project" value="UniProtKB"/>
</dbReference>
<dbReference type="GO" id="GO:0000184">
    <property type="term" value="P:nuclear-transcribed mRNA catabolic process, nonsense-mediated decay"/>
    <property type="evidence" value="ECO:0007669"/>
    <property type="project" value="UniProtKB-KW"/>
</dbReference>
<dbReference type="GO" id="GO:0043488">
    <property type="term" value="P:regulation of mRNA stability"/>
    <property type="evidence" value="ECO:0000250"/>
    <property type="project" value="UniProtKB"/>
</dbReference>
<dbReference type="CDD" id="cd03672">
    <property type="entry name" value="NUDIX_Dcp2p_Nudt20"/>
    <property type="match status" value="1"/>
</dbReference>
<dbReference type="FunFam" id="1.10.10.1050:FF:000001">
    <property type="entry name" value="M7GpppN-mRNA hydrolase isoform 2"/>
    <property type="match status" value="1"/>
</dbReference>
<dbReference type="FunFam" id="3.90.79.10:FF:000003">
    <property type="entry name" value="M7GpppN-mRNA hydrolase isoform 2"/>
    <property type="match status" value="1"/>
</dbReference>
<dbReference type="Gene3D" id="1.10.10.1050">
    <property type="entry name" value="Dcp2, box A domain"/>
    <property type="match status" value="1"/>
</dbReference>
<dbReference type="Gene3D" id="3.90.79.10">
    <property type="entry name" value="Nucleoside Triphosphate Pyrophosphohydrolase"/>
    <property type="match status" value="1"/>
</dbReference>
<dbReference type="InterPro" id="IPR007722">
    <property type="entry name" value="DCP2_BoxA"/>
</dbReference>
<dbReference type="InterPro" id="IPR036189">
    <property type="entry name" value="DCP2_BoxA_sf"/>
</dbReference>
<dbReference type="InterPro" id="IPR044099">
    <property type="entry name" value="Dcp2_NUDIX"/>
</dbReference>
<dbReference type="InterPro" id="IPR015797">
    <property type="entry name" value="NUDIX_hydrolase-like_dom_sf"/>
</dbReference>
<dbReference type="InterPro" id="IPR020084">
    <property type="entry name" value="NUDIX_hydrolase_CS"/>
</dbReference>
<dbReference type="InterPro" id="IPR000086">
    <property type="entry name" value="NUDIX_hydrolase_dom"/>
</dbReference>
<dbReference type="PANTHER" id="PTHR23114">
    <property type="entry name" value="M7GPPPN-MRNA HYDROLASE"/>
    <property type="match status" value="1"/>
</dbReference>
<dbReference type="PANTHER" id="PTHR23114:SF17">
    <property type="entry name" value="M7GPPPN-MRNA HYDROLASE"/>
    <property type="match status" value="1"/>
</dbReference>
<dbReference type="Pfam" id="PF05026">
    <property type="entry name" value="DCP2"/>
    <property type="match status" value="1"/>
</dbReference>
<dbReference type="Pfam" id="PF00293">
    <property type="entry name" value="NUDIX"/>
    <property type="match status" value="1"/>
</dbReference>
<dbReference type="SMART" id="SM01125">
    <property type="entry name" value="DCP2"/>
    <property type="match status" value="1"/>
</dbReference>
<dbReference type="SUPFAM" id="SSF140586">
    <property type="entry name" value="Dcp2 domain-like"/>
    <property type="match status" value="1"/>
</dbReference>
<dbReference type="SUPFAM" id="SSF55811">
    <property type="entry name" value="Nudix"/>
    <property type="match status" value="1"/>
</dbReference>
<dbReference type="PROSITE" id="PS51462">
    <property type="entry name" value="NUDIX"/>
    <property type="match status" value="1"/>
</dbReference>
<dbReference type="PROSITE" id="PS00893">
    <property type="entry name" value="NUDIX_BOX"/>
    <property type="match status" value="1"/>
</dbReference>
<organism>
    <name type="scientific">Pongo abelii</name>
    <name type="common">Sumatran orangutan</name>
    <name type="synonym">Pongo pygmaeus abelii</name>
    <dbReference type="NCBI Taxonomy" id="9601"/>
    <lineage>
        <taxon>Eukaryota</taxon>
        <taxon>Metazoa</taxon>
        <taxon>Chordata</taxon>
        <taxon>Craniata</taxon>
        <taxon>Vertebrata</taxon>
        <taxon>Euteleostomi</taxon>
        <taxon>Mammalia</taxon>
        <taxon>Eutheria</taxon>
        <taxon>Euarchontoglires</taxon>
        <taxon>Primates</taxon>
        <taxon>Haplorrhini</taxon>
        <taxon>Catarrhini</taxon>
        <taxon>Hominidae</taxon>
        <taxon>Pongo</taxon>
    </lineage>
</organism>
<evidence type="ECO:0000250" key="1"/>
<evidence type="ECO:0000250" key="2">
    <source>
        <dbReference type="UniProtKB" id="Q8IU60"/>
    </source>
</evidence>
<evidence type="ECO:0000255" key="3">
    <source>
        <dbReference type="PROSITE-ProRule" id="PRU00794"/>
    </source>
</evidence>
<evidence type="ECO:0000256" key="4">
    <source>
        <dbReference type="SAM" id="MobiDB-lite"/>
    </source>
</evidence>
<evidence type="ECO:0000305" key="5"/>